<protein>
    <recommendedName>
        <fullName evidence="1">LexA repressor</fullName>
        <ecNumber evidence="1">3.4.21.88</ecNumber>
    </recommendedName>
</protein>
<reference key="1">
    <citation type="journal article" date="2006" name="Proc. Natl. Acad. Sci. U.S.A.">
        <title>Evolution of sensory complexity recorded in a myxobacterial genome.</title>
        <authorList>
            <person name="Goldman B.S."/>
            <person name="Nierman W.C."/>
            <person name="Kaiser D."/>
            <person name="Slater S.C."/>
            <person name="Durkin A.S."/>
            <person name="Eisen J.A."/>
            <person name="Ronning C.M."/>
            <person name="Barbazuk W.B."/>
            <person name="Blanchard M."/>
            <person name="Field C."/>
            <person name="Halling C."/>
            <person name="Hinkle G."/>
            <person name="Iartchuk O."/>
            <person name="Kim H.S."/>
            <person name="Mackenzie C."/>
            <person name="Madupu R."/>
            <person name="Miller N."/>
            <person name="Shvartsbeyn A."/>
            <person name="Sullivan S.A."/>
            <person name="Vaudin M."/>
            <person name="Wiegand R."/>
            <person name="Kaplan H.B."/>
        </authorList>
    </citation>
    <scope>NUCLEOTIDE SEQUENCE [LARGE SCALE GENOMIC DNA]</scope>
    <source>
        <strain>DK1622</strain>
    </source>
</reference>
<name>LEXA_MYXXD</name>
<keyword id="KW-0068">Autocatalytic cleavage</keyword>
<keyword id="KW-0227">DNA damage</keyword>
<keyword id="KW-0234">DNA repair</keyword>
<keyword id="KW-0235">DNA replication</keyword>
<keyword id="KW-0238">DNA-binding</keyword>
<keyword id="KW-0378">Hydrolase</keyword>
<keyword id="KW-1185">Reference proteome</keyword>
<keyword id="KW-0678">Repressor</keyword>
<keyword id="KW-0742">SOS response</keyword>
<keyword id="KW-0804">Transcription</keyword>
<keyword id="KW-0805">Transcription regulation</keyword>
<gene>
    <name evidence="1" type="primary">lexA</name>
    <name type="ordered locus">MXAN_4446</name>
</gene>
<accession>Q1D406</accession>
<evidence type="ECO:0000255" key="1">
    <source>
        <dbReference type="HAMAP-Rule" id="MF_00015"/>
    </source>
</evidence>
<comment type="function">
    <text evidence="1">Represses a number of genes involved in the response to DNA damage (SOS response), including recA and lexA. In the presence of single-stranded DNA, RecA interacts with LexA causing an autocatalytic cleavage which disrupts the DNA-binding part of LexA, leading to derepression of the SOS regulon and eventually DNA repair.</text>
</comment>
<comment type="catalytic activity">
    <reaction evidence="1">
        <text>Hydrolysis of Ala-|-Gly bond in repressor LexA.</text>
        <dbReference type="EC" id="3.4.21.88"/>
    </reaction>
</comment>
<comment type="subunit">
    <text evidence="1">Homodimer.</text>
</comment>
<comment type="similarity">
    <text evidence="1">Belongs to the peptidase S24 family.</text>
</comment>
<sequence length="222" mass="24712">MEELTERQREILSFIVKETETRGFPPTIREIGEHMDIRSTNGVNDHLKALERKGYLNRGEQQSRSLVATKRARLLLGLGARKDSGMVEIPLLGKVAAGAPLLAQENMEDSVKIDSFLLGGVNGREVFALRVKGQSMIDDGIHDGDYLFVKKTPSAQPGEIVVALIEDEATVKRYYPEGDRIRFQPANATMQPIYVSRAEFRSTMILGQVVGVYRKLQGGRTP</sequence>
<feature type="chain" id="PRO_1000001307" description="LexA repressor">
    <location>
        <begin position="1"/>
        <end position="222"/>
    </location>
</feature>
<feature type="DNA-binding region" description="H-T-H motif" evidence="1">
    <location>
        <begin position="28"/>
        <end position="48"/>
    </location>
</feature>
<feature type="active site" description="For autocatalytic cleavage activity" evidence="1">
    <location>
        <position position="135"/>
    </location>
</feature>
<feature type="active site" description="For autocatalytic cleavage activity" evidence="1">
    <location>
        <position position="172"/>
    </location>
</feature>
<feature type="site" description="Cleavage; by autolysis" evidence="1">
    <location>
        <begin position="97"/>
        <end position="98"/>
    </location>
</feature>
<proteinExistence type="inferred from homology"/>
<organism>
    <name type="scientific">Myxococcus xanthus (strain DK1622)</name>
    <dbReference type="NCBI Taxonomy" id="246197"/>
    <lineage>
        <taxon>Bacteria</taxon>
        <taxon>Pseudomonadati</taxon>
        <taxon>Myxococcota</taxon>
        <taxon>Myxococcia</taxon>
        <taxon>Myxococcales</taxon>
        <taxon>Cystobacterineae</taxon>
        <taxon>Myxococcaceae</taxon>
        <taxon>Myxococcus</taxon>
    </lineage>
</organism>
<dbReference type="EC" id="3.4.21.88" evidence="1"/>
<dbReference type="EMBL" id="CP000113">
    <property type="protein sequence ID" value="ABF92162.1"/>
    <property type="molecule type" value="Genomic_DNA"/>
</dbReference>
<dbReference type="RefSeq" id="WP_011554445.1">
    <property type="nucleotide sequence ID" value="NC_008095.1"/>
</dbReference>
<dbReference type="SMR" id="Q1D406"/>
<dbReference type="STRING" id="246197.MXAN_4446"/>
<dbReference type="MEROPS" id="S24.001"/>
<dbReference type="EnsemblBacteria" id="ABF92162">
    <property type="protein sequence ID" value="ABF92162"/>
    <property type="gene ID" value="MXAN_4446"/>
</dbReference>
<dbReference type="GeneID" id="41361758"/>
<dbReference type="KEGG" id="mxa:MXAN_4446"/>
<dbReference type="eggNOG" id="COG1974">
    <property type="taxonomic scope" value="Bacteria"/>
</dbReference>
<dbReference type="HOGENOM" id="CLU_066192_45_1_7"/>
<dbReference type="OrthoDB" id="9802364at2"/>
<dbReference type="Proteomes" id="UP000002402">
    <property type="component" value="Chromosome"/>
</dbReference>
<dbReference type="CollecTF" id="EXPREG_00000d50"/>
<dbReference type="GO" id="GO:0032993">
    <property type="term" value="C:protein-DNA complex"/>
    <property type="evidence" value="ECO:0000315"/>
    <property type="project" value="CollecTF"/>
</dbReference>
<dbReference type="GO" id="GO:0001217">
    <property type="term" value="F:DNA-binding transcription repressor activity"/>
    <property type="evidence" value="ECO:0000315"/>
    <property type="project" value="CollecTF"/>
</dbReference>
<dbReference type="GO" id="GO:0004252">
    <property type="term" value="F:serine-type endopeptidase activity"/>
    <property type="evidence" value="ECO:0007669"/>
    <property type="project" value="UniProtKB-UniRule"/>
</dbReference>
<dbReference type="GO" id="GO:0000976">
    <property type="term" value="F:transcription cis-regulatory region binding"/>
    <property type="evidence" value="ECO:0000315"/>
    <property type="project" value="CollecTF"/>
</dbReference>
<dbReference type="GO" id="GO:0006281">
    <property type="term" value="P:DNA repair"/>
    <property type="evidence" value="ECO:0007669"/>
    <property type="project" value="UniProtKB-UniRule"/>
</dbReference>
<dbReference type="GO" id="GO:0006260">
    <property type="term" value="P:DNA replication"/>
    <property type="evidence" value="ECO:0007669"/>
    <property type="project" value="UniProtKB-UniRule"/>
</dbReference>
<dbReference type="GO" id="GO:0045892">
    <property type="term" value="P:negative regulation of DNA-templated transcription"/>
    <property type="evidence" value="ECO:0000269"/>
    <property type="project" value="CollecTF"/>
</dbReference>
<dbReference type="GO" id="GO:0006508">
    <property type="term" value="P:proteolysis"/>
    <property type="evidence" value="ECO:0007669"/>
    <property type="project" value="InterPro"/>
</dbReference>
<dbReference type="GO" id="GO:0009432">
    <property type="term" value="P:SOS response"/>
    <property type="evidence" value="ECO:0007669"/>
    <property type="project" value="UniProtKB-UniRule"/>
</dbReference>
<dbReference type="CDD" id="cd06529">
    <property type="entry name" value="S24_LexA-like"/>
    <property type="match status" value="1"/>
</dbReference>
<dbReference type="FunFam" id="1.10.10.10:FF:000009">
    <property type="entry name" value="LexA repressor"/>
    <property type="match status" value="1"/>
</dbReference>
<dbReference type="FunFam" id="2.10.109.10:FF:000001">
    <property type="entry name" value="LexA repressor"/>
    <property type="match status" value="1"/>
</dbReference>
<dbReference type="Gene3D" id="2.10.109.10">
    <property type="entry name" value="Umud Fragment, subunit A"/>
    <property type="match status" value="1"/>
</dbReference>
<dbReference type="Gene3D" id="1.10.10.10">
    <property type="entry name" value="Winged helix-like DNA-binding domain superfamily/Winged helix DNA-binding domain"/>
    <property type="match status" value="1"/>
</dbReference>
<dbReference type="HAMAP" id="MF_00015">
    <property type="entry name" value="LexA"/>
    <property type="match status" value="1"/>
</dbReference>
<dbReference type="InterPro" id="IPR006200">
    <property type="entry name" value="LexA"/>
</dbReference>
<dbReference type="InterPro" id="IPR039418">
    <property type="entry name" value="LexA-like"/>
</dbReference>
<dbReference type="InterPro" id="IPR036286">
    <property type="entry name" value="LexA/Signal_pep-like_sf"/>
</dbReference>
<dbReference type="InterPro" id="IPR006199">
    <property type="entry name" value="LexA_DNA-bd_dom"/>
</dbReference>
<dbReference type="InterPro" id="IPR050077">
    <property type="entry name" value="LexA_repressor"/>
</dbReference>
<dbReference type="InterPro" id="IPR006197">
    <property type="entry name" value="Peptidase_S24_LexA"/>
</dbReference>
<dbReference type="InterPro" id="IPR015927">
    <property type="entry name" value="Peptidase_S24_S26A/B/C"/>
</dbReference>
<dbReference type="InterPro" id="IPR036388">
    <property type="entry name" value="WH-like_DNA-bd_sf"/>
</dbReference>
<dbReference type="InterPro" id="IPR036390">
    <property type="entry name" value="WH_DNA-bd_sf"/>
</dbReference>
<dbReference type="NCBIfam" id="TIGR00498">
    <property type="entry name" value="lexA"/>
    <property type="match status" value="1"/>
</dbReference>
<dbReference type="PANTHER" id="PTHR33516">
    <property type="entry name" value="LEXA REPRESSOR"/>
    <property type="match status" value="1"/>
</dbReference>
<dbReference type="PANTHER" id="PTHR33516:SF2">
    <property type="entry name" value="LEXA REPRESSOR-RELATED"/>
    <property type="match status" value="1"/>
</dbReference>
<dbReference type="Pfam" id="PF01726">
    <property type="entry name" value="LexA_DNA_bind"/>
    <property type="match status" value="1"/>
</dbReference>
<dbReference type="Pfam" id="PF00717">
    <property type="entry name" value="Peptidase_S24"/>
    <property type="match status" value="1"/>
</dbReference>
<dbReference type="PRINTS" id="PR00726">
    <property type="entry name" value="LEXASERPTASE"/>
</dbReference>
<dbReference type="SUPFAM" id="SSF51306">
    <property type="entry name" value="LexA/Signal peptidase"/>
    <property type="match status" value="1"/>
</dbReference>
<dbReference type="SUPFAM" id="SSF46785">
    <property type="entry name" value="Winged helix' DNA-binding domain"/>
    <property type="match status" value="1"/>
</dbReference>